<sequence>MVREDVVGSTRTLQWKCVESRVDSKRLYYGRFVLSPLMKGQADTIGIAIRRALLGEIEGTCITRATSENVLHEYSTIAGIEESVHEILLNLKDIVLRSNLYGVRNASICVRGPKYITAQDIISPPSVEIVDTTQHIANLTEPINLCIELQIKRDRGYRMKSTNDSHDGSYPIDIVSMPVRNANHSIHSYGNGNEKQEILFIEIWTNGSLTPKEALYEASRNLIDLLIPFLHAEEEDMNFKENENRWNLPPFSFQDKFTNFKKNKKGIPLTCIFIDQSELSSRTYNCLKRSNIHTLLDLLSHSQEDLMKMEYFRTEDVKQILSTVQKHFAINLLNKKL</sequence>
<dbReference type="EC" id="2.7.7.6" evidence="1"/>
<dbReference type="EMBL" id="AY916449">
    <property type="protein sequence ID" value="AAW82531.1"/>
    <property type="molecule type" value="Genomic_DNA"/>
</dbReference>
<dbReference type="RefSeq" id="YP_358613.1">
    <property type="nucleotide sequence ID" value="NC_007499.1"/>
</dbReference>
<dbReference type="SMR" id="Q3BAK5"/>
<dbReference type="GeneID" id="3741712"/>
<dbReference type="GO" id="GO:0009507">
    <property type="term" value="C:chloroplast"/>
    <property type="evidence" value="ECO:0007669"/>
    <property type="project" value="UniProtKB-SubCell"/>
</dbReference>
<dbReference type="GO" id="GO:0000428">
    <property type="term" value="C:DNA-directed RNA polymerase complex"/>
    <property type="evidence" value="ECO:0007669"/>
    <property type="project" value="UniProtKB-KW"/>
</dbReference>
<dbReference type="GO" id="GO:0005739">
    <property type="term" value="C:mitochondrion"/>
    <property type="evidence" value="ECO:0007669"/>
    <property type="project" value="GOC"/>
</dbReference>
<dbReference type="GO" id="GO:0003677">
    <property type="term" value="F:DNA binding"/>
    <property type="evidence" value="ECO:0007669"/>
    <property type="project" value="UniProtKB-UniRule"/>
</dbReference>
<dbReference type="GO" id="GO:0003899">
    <property type="term" value="F:DNA-directed RNA polymerase activity"/>
    <property type="evidence" value="ECO:0007669"/>
    <property type="project" value="UniProtKB-UniRule"/>
</dbReference>
<dbReference type="GO" id="GO:0046983">
    <property type="term" value="F:protein dimerization activity"/>
    <property type="evidence" value="ECO:0007669"/>
    <property type="project" value="InterPro"/>
</dbReference>
<dbReference type="GO" id="GO:0006351">
    <property type="term" value="P:DNA-templated transcription"/>
    <property type="evidence" value="ECO:0007669"/>
    <property type="project" value="UniProtKB-UniRule"/>
</dbReference>
<dbReference type="CDD" id="cd06928">
    <property type="entry name" value="RNAP_alpha_NTD"/>
    <property type="match status" value="1"/>
</dbReference>
<dbReference type="FunFam" id="2.170.120.12:FF:000001">
    <property type="entry name" value="DNA-directed RNA polymerase subunit alpha"/>
    <property type="match status" value="1"/>
</dbReference>
<dbReference type="Gene3D" id="1.10.150.20">
    <property type="entry name" value="5' to 3' exonuclease, C-terminal subdomain"/>
    <property type="match status" value="1"/>
</dbReference>
<dbReference type="Gene3D" id="2.170.120.12">
    <property type="entry name" value="DNA-directed RNA polymerase, insert domain"/>
    <property type="match status" value="1"/>
</dbReference>
<dbReference type="Gene3D" id="3.30.1360.10">
    <property type="entry name" value="RNA polymerase, RBP11-like subunit"/>
    <property type="match status" value="1"/>
</dbReference>
<dbReference type="HAMAP" id="MF_00059">
    <property type="entry name" value="RNApol_bact_RpoA"/>
    <property type="match status" value="1"/>
</dbReference>
<dbReference type="InterPro" id="IPR011262">
    <property type="entry name" value="DNA-dir_RNA_pol_insert"/>
</dbReference>
<dbReference type="InterPro" id="IPR011263">
    <property type="entry name" value="DNA-dir_RNA_pol_RpoA/D/Rpb3"/>
</dbReference>
<dbReference type="InterPro" id="IPR011773">
    <property type="entry name" value="DNA-dir_RpoA"/>
</dbReference>
<dbReference type="InterPro" id="IPR036603">
    <property type="entry name" value="RBP11-like"/>
</dbReference>
<dbReference type="InterPro" id="IPR011260">
    <property type="entry name" value="RNAP_asu_C"/>
</dbReference>
<dbReference type="InterPro" id="IPR036643">
    <property type="entry name" value="RNApol_insert_sf"/>
</dbReference>
<dbReference type="NCBIfam" id="TIGR02027">
    <property type="entry name" value="rpoA"/>
    <property type="match status" value="1"/>
</dbReference>
<dbReference type="Pfam" id="PF01000">
    <property type="entry name" value="RNA_pol_A_bac"/>
    <property type="match status" value="1"/>
</dbReference>
<dbReference type="Pfam" id="PF03118">
    <property type="entry name" value="RNA_pol_A_CTD"/>
    <property type="match status" value="1"/>
</dbReference>
<dbReference type="Pfam" id="PF01193">
    <property type="entry name" value="RNA_pol_L"/>
    <property type="match status" value="1"/>
</dbReference>
<dbReference type="SMART" id="SM00662">
    <property type="entry name" value="RPOLD"/>
    <property type="match status" value="1"/>
</dbReference>
<dbReference type="SUPFAM" id="SSF47789">
    <property type="entry name" value="C-terminal domain of RNA polymerase alpha subunit"/>
    <property type="match status" value="1"/>
</dbReference>
<dbReference type="SUPFAM" id="SSF56553">
    <property type="entry name" value="Insert subdomain of RNA polymerase alpha subunit"/>
    <property type="match status" value="1"/>
</dbReference>
<dbReference type="SUPFAM" id="SSF55257">
    <property type="entry name" value="RBP11-like subunits of RNA polymerase"/>
    <property type="match status" value="1"/>
</dbReference>
<accession>Q3BAK5</accession>
<gene>
    <name evidence="1" type="primary">rpoA</name>
</gene>
<evidence type="ECO:0000255" key="1">
    <source>
        <dbReference type="HAMAP-Rule" id="MF_00059"/>
    </source>
</evidence>
<protein>
    <recommendedName>
        <fullName evidence="1">DNA-directed RNA polymerase subunit alpha</fullName>
        <shortName evidence="1">PEP</shortName>
        <ecNumber evidence="1">2.7.7.6</ecNumber>
    </recommendedName>
    <alternativeName>
        <fullName evidence="1">Plastid-encoded RNA polymerase subunit alpha</fullName>
        <shortName evidence="1">RNA polymerase subunit alpha</shortName>
    </alternativeName>
</protein>
<keyword id="KW-0150">Chloroplast</keyword>
<keyword id="KW-0240">DNA-directed RNA polymerase</keyword>
<keyword id="KW-0548">Nucleotidyltransferase</keyword>
<keyword id="KW-0934">Plastid</keyword>
<keyword id="KW-0804">Transcription</keyword>
<keyword id="KW-0808">Transferase</keyword>
<name>RPOA_PHAAO</name>
<comment type="function">
    <text evidence="1">DNA-dependent RNA polymerase catalyzes the transcription of DNA into RNA using the four ribonucleoside triphosphates as substrates.</text>
</comment>
<comment type="catalytic activity">
    <reaction evidence="1">
        <text>RNA(n) + a ribonucleoside 5'-triphosphate = RNA(n+1) + diphosphate</text>
        <dbReference type="Rhea" id="RHEA:21248"/>
        <dbReference type="Rhea" id="RHEA-COMP:14527"/>
        <dbReference type="Rhea" id="RHEA-COMP:17342"/>
        <dbReference type="ChEBI" id="CHEBI:33019"/>
        <dbReference type="ChEBI" id="CHEBI:61557"/>
        <dbReference type="ChEBI" id="CHEBI:140395"/>
        <dbReference type="EC" id="2.7.7.6"/>
    </reaction>
</comment>
<comment type="subunit">
    <text evidence="1">In plastids the minimal PEP RNA polymerase catalytic core is composed of four subunits: alpha, beta, beta', and beta''. When a (nuclear-encoded) sigma factor is associated with the core the holoenzyme is formed, which can initiate transcription.</text>
</comment>
<comment type="subcellular location">
    <subcellularLocation>
        <location>Plastid</location>
        <location>Chloroplast</location>
    </subcellularLocation>
</comment>
<comment type="domain">
    <text evidence="1">The N-terminal domain is essential for RNAP assembly and basal transcription, whereas the C-terminal domain is involved in interaction with transcriptional regulators and with upstream promoter elements.</text>
</comment>
<comment type="similarity">
    <text evidence="1">Belongs to the RNA polymerase alpha chain family.</text>
</comment>
<geneLocation type="chloroplast"/>
<feature type="chain" id="PRO_0000225925" description="DNA-directed RNA polymerase subunit alpha">
    <location>
        <begin position="1"/>
        <end position="337"/>
    </location>
</feature>
<feature type="region of interest" description="Alpha N-terminal domain (alpha-NTD)" evidence="1">
    <location>
        <begin position="1"/>
        <end position="233"/>
    </location>
</feature>
<feature type="region of interest" description="Alpha C-terminal domain (alpha-CTD)" evidence="1">
    <location>
        <begin position="265"/>
        <end position="337"/>
    </location>
</feature>
<reference key="1">
    <citation type="journal article" date="2006" name="Mol. Biol. Evol.">
        <title>The chloroplast genome of Phalaenopsis aphrodite (Orchidaceae): comparative analysis of evolutionary rate with that of grasses and its phylogenetic implications.</title>
        <authorList>
            <person name="Chang C.-C."/>
            <person name="Lin H.-C."/>
            <person name="Lin I.-P."/>
            <person name="Chow T.-Y."/>
            <person name="Chen H.-H."/>
            <person name="Chen W.-H."/>
            <person name="Cheng C.-H."/>
            <person name="Lin C.-Y."/>
            <person name="Liu S.-M."/>
            <person name="Chang C.-C."/>
            <person name="Chaw S.-M."/>
        </authorList>
    </citation>
    <scope>NUCLEOTIDE SEQUENCE [LARGE SCALE GENOMIC DNA]</scope>
    <source>
        <strain>cv. Taisugar TS-97</strain>
    </source>
</reference>
<organism>
    <name type="scientific">Phalaenopsis aphrodite subsp. formosana</name>
    <name type="common">Moth orchid</name>
    <dbReference type="NCBI Taxonomy" id="308872"/>
    <lineage>
        <taxon>Eukaryota</taxon>
        <taxon>Viridiplantae</taxon>
        <taxon>Streptophyta</taxon>
        <taxon>Embryophyta</taxon>
        <taxon>Tracheophyta</taxon>
        <taxon>Spermatophyta</taxon>
        <taxon>Magnoliopsida</taxon>
        <taxon>Liliopsida</taxon>
        <taxon>Asparagales</taxon>
        <taxon>Orchidaceae</taxon>
        <taxon>Epidendroideae</taxon>
        <taxon>Vandeae</taxon>
        <taxon>Aeridinae</taxon>
        <taxon>Phalaenopsis</taxon>
    </lineage>
</organism>
<proteinExistence type="inferred from homology"/>